<comment type="function">
    <text evidence="1">Catalyzes the carbon skeleton rearrangement of L-glutamate to L-threo-3-methylaspartate ((2S,3S)-3-methylaspartate).</text>
</comment>
<comment type="catalytic activity">
    <reaction evidence="1">
        <text>(2S,3S)-3-methyl-L-aspartate = L-glutamate</text>
        <dbReference type="Rhea" id="RHEA:12857"/>
        <dbReference type="ChEBI" id="CHEBI:29985"/>
        <dbReference type="ChEBI" id="CHEBI:58724"/>
        <dbReference type="EC" id="5.4.99.1"/>
    </reaction>
</comment>
<comment type="cofactor">
    <cofactor evidence="1">
        <name>adenosylcob(III)alamin</name>
        <dbReference type="ChEBI" id="CHEBI:18408"/>
    </cofactor>
</comment>
<comment type="pathway">
    <text evidence="1">Amino-acid degradation; L-glutamate degradation via mesaconate pathway; acetate and pyruvate from L-glutamate: step 1/4.</text>
</comment>
<comment type="subunit">
    <text evidence="1">Heterotetramer composed of 2 epsilon subunits (GlmE) and 2 sigma subunits (GlmS). GlmE exists as a homodimer and GlmS as a monomer.</text>
</comment>
<comment type="similarity">
    <text evidence="1">Belongs to the methylaspartate mutase GlmS subunit family.</text>
</comment>
<evidence type="ECO:0000255" key="1">
    <source>
        <dbReference type="HAMAP-Rule" id="MF_00526"/>
    </source>
</evidence>
<sequence>MEKKTIVLGVIGSDCHAVGNKILDHSFTAAGFNVVNIGVLSPQEDFINAAIETKADAILVSSLYGQGEIDCKGLRQKCDEAGLEGILLYVGGNIVVGKQHWPDVEKRFKDMGYDRVYAPGTPPEVGIADLKEDLNIK</sequence>
<name>GMSS_CLOTE</name>
<proteinExistence type="inferred from homology"/>
<gene>
    <name evidence="1" type="primary">glmS</name>
    <name type="synonym">mutS</name>
    <name type="ordered locus">CTC_02568</name>
</gene>
<accession>Q890S0</accession>
<dbReference type="EC" id="5.4.99.1" evidence="1"/>
<dbReference type="EMBL" id="AE015927">
    <property type="protein sequence ID" value="AAO37025.1"/>
    <property type="molecule type" value="Genomic_DNA"/>
</dbReference>
<dbReference type="SMR" id="Q890S0"/>
<dbReference type="STRING" id="212717.CTC_02568"/>
<dbReference type="GeneID" id="24254649"/>
<dbReference type="KEGG" id="ctc:CTC_02568"/>
<dbReference type="HOGENOM" id="CLU_136705_0_0_9"/>
<dbReference type="OrthoDB" id="9791348at2"/>
<dbReference type="UniPathway" id="UPA00561">
    <property type="reaction ID" value="UER00617"/>
</dbReference>
<dbReference type="Proteomes" id="UP000001412">
    <property type="component" value="Chromosome"/>
</dbReference>
<dbReference type="GO" id="GO:0031419">
    <property type="term" value="F:cobalamin binding"/>
    <property type="evidence" value="ECO:0007669"/>
    <property type="project" value="UniProtKB-KW"/>
</dbReference>
<dbReference type="GO" id="GO:0046872">
    <property type="term" value="F:metal ion binding"/>
    <property type="evidence" value="ECO:0007669"/>
    <property type="project" value="UniProtKB-KW"/>
</dbReference>
<dbReference type="GO" id="GO:0050097">
    <property type="term" value="F:methylaspartate mutase activity"/>
    <property type="evidence" value="ECO:0007669"/>
    <property type="project" value="UniProtKB-UniRule"/>
</dbReference>
<dbReference type="GO" id="GO:0019670">
    <property type="term" value="P:anaerobic glutamate catabolic process"/>
    <property type="evidence" value="ECO:0007669"/>
    <property type="project" value="InterPro"/>
</dbReference>
<dbReference type="GO" id="GO:0019553">
    <property type="term" value="P:glutamate catabolic process via L-citramalate"/>
    <property type="evidence" value="ECO:0007669"/>
    <property type="project" value="UniProtKB-UniRule"/>
</dbReference>
<dbReference type="CDD" id="cd02072">
    <property type="entry name" value="Glm_B12_BD"/>
    <property type="match status" value="1"/>
</dbReference>
<dbReference type="Gene3D" id="3.40.50.280">
    <property type="entry name" value="Cobalamin-binding domain"/>
    <property type="match status" value="1"/>
</dbReference>
<dbReference type="HAMAP" id="MF_00526">
    <property type="entry name" value="Me_Asp_mutase_S"/>
    <property type="match status" value="1"/>
</dbReference>
<dbReference type="InterPro" id="IPR006158">
    <property type="entry name" value="Cobalamin-bd"/>
</dbReference>
<dbReference type="InterPro" id="IPR036724">
    <property type="entry name" value="Cobalamin-bd_sf"/>
</dbReference>
<dbReference type="InterPro" id="IPR006394">
    <property type="entry name" value="GlmS"/>
</dbReference>
<dbReference type="NCBIfam" id="TIGR01501">
    <property type="entry name" value="MthylAspMutase"/>
    <property type="match status" value="1"/>
</dbReference>
<dbReference type="NCBIfam" id="NF002612">
    <property type="entry name" value="PRK02261.1"/>
    <property type="match status" value="1"/>
</dbReference>
<dbReference type="Pfam" id="PF02310">
    <property type="entry name" value="B12-binding"/>
    <property type="match status" value="1"/>
</dbReference>
<dbReference type="SUPFAM" id="SSF52242">
    <property type="entry name" value="Cobalamin (vitamin B12)-binding domain"/>
    <property type="match status" value="1"/>
</dbReference>
<dbReference type="PROSITE" id="PS51332">
    <property type="entry name" value="B12_BINDING"/>
    <property type="match status" value="1"/>
</dbReference>
<keyword id="KW-0846">Cobalamin</keyword>
<keyword id="KW-0170">Cobalt</keyword>
<keyword id="KW-0413">Isomerase</keyword>
<keyword id="KW-0479">Metal-binding</keyword>
<keyword id="KW-1185">Reference proteome</keyword>
<feature type="chain" id="PRO_0000216444" description="Glutamate mutase sigma subunit">
    <location>
        <begin position="1"/>
        <end position="137"/>
    </location>
</feature>
<feature type="domain" description="B12-binding" evidence="1">
    <location>
        <begin position="3"/>
        <end position="137"/>
    </location>
</feature>
<feature type="binding site" evidence="1">
    <location>
        <begin position="13"/>
        <end position="17"/>
    </location>
    <ligand>
        <name>adenosylcob(III)alamin</name>
        <dbReference type="ChEBI" id="CHEBI:18408"/>
    </ligand>
</feature>
<feature type="binding site" description="axial binding residue" evidence="1">
    <location>
        <position position="16"/>
    </location>
    <ligand>
        <name>adenosylcob(III)alamin</name>
        <dbReference type="ChEBI" id="CHEBI:18408"/>
    </ligand>
    <ligandPart>
        <name>Co</name>
        <dbReference type="ChEBI" id="CHEBI:27638"/>
    </ligandPart>
</feature>
<feature type="binding site" evidence="1">
    <location>
        <begin position="61"/>
        <end position="63"/>
    </location>
    <ligand>
        <name>adenosylcob(III)alamin</name>
        <dbReference type="ChEBI" id="CHEBI:18408"/>
    </ligand>
</feature>
<feature type="binding site" evidence="1">
    <location>
        <begin position="93"/>
        <end position="97"/>
    </location>
    <ligand>
        <name>adenosylcob(III)alamin</name>
        <dbReference type="ChEBI" id="CHEBI:18408"/>
    </ligand>
</feature>
<reference key="1">
    <citation type="journal article" date="2003" name="Proc. Natl. Acad. Sci. U.S.A.">
        <title>The genome sequence of Clostridium tetani, the causative agent of tetanus disease.</title>
        <authorList>
            <person name="Brueggemann H."/>
            <person name="Baeumer S."/>
            <person name="Fricke W.F."/>
            <person name="Wiezer A."/>
            <person name="Liesegang H."/>
            <person name="Decker I."/>
            <person name="Herzberg C."/>
            <person name="Martinez-Arias R."/>
            <person name="Merkl R."/>
            <person name="Henne A."/>
            <person name="Gottschalk G."/>
        </authorList>
    </citation>
    <scope>NUCLEOTIDE SEQUENCE [LARGE SCALE GENOMIC DNA]</scope>
    <source>
        <strain>Massachusetts / E88</strain>
    </source>
</reference>
<protein>
    <recommendedName>
        <fullName evidence="1">Glutamate mutase sigma subunit</fullName>
        <ecNumber evidence="1">5.4.99.1</ecNumber>
    </recommendedName>
    <alternativeName>
        <fullName evidence="1">Glutamate mutase S chain</fullName>
    </alternativeName>
    <alternativeName>
        <fullName evidence="1">Glutamate mutase small subunit</fullName>
    </alternativeName>
    <alternativeName>
        <fullName evidence="1">Methylaspartate mutase</fullName>
    </alternativeName>
</protein>
<organism>
    <name type="scientific">Clostridium tetani (strain Massachusetts / E88)</name>
    <dbReference type="NCBI Taxonomy" id="212717"/>
    <lineage>
        <taxon>Bacteria</taxon>
        <taxon>Bacillati</taxon>
        <taxon>Bacillota</taxon>
        <taxon>Clostridia</taxon>
        <taxon>Eubacteriales</taxon>
        <taxon>Clostridiaceae</taxon>
        <taxon>Clostridium</taxon>
    </lineage>
</organism>